<sequence>MVLIKEFRVVLPCSVQEYQVGQLYSVAEASKNETGGGEGIEVLKNEPYENDGEKGQYTHKIYHLKSKVPAFVRMIAPEGSLVFHEKAWNAYPYCRTIVTNEYMKDDFFIKIETWHKPDLGTLENVHGLDPNTWKTVEIVHIDIADRSQVEPADYKADEDPALFQSVKTKRGPLGPNWKKELANTPDCPKMCAYKLVTIKFKWWGLQSKVENFIQKQEKRIFTNLHRQLFCWIDKWIDLTMEDIRRMEDETQKELETMRKKGSVRGTSAADA</sequence>
<comment type="function">
    <text evidence="1 3 4">Catalyzes the transfer of phosphatidylinositol between membranes (PubMed:18636990). Also catalyzes the transfer of phosphatidylcholine and sphingomyelin between membranes (By similarity). Required for COPI-mediated retrograde transport from the Golgi to the endoplasmic reticulum; phosphatidylinositol and phosphatidylcholine transfer activity is essential for this function (By similarity).</text>
</comment>
<comment type="catalytic activity">
    <reaction evidence="3">
        <text>a 1,2-diacyl-sn-glycero-3-phosphocholine(in) = a 1,2-diacyl-sn-glycero-3-phosphocholine(out)</text>
        <dbReference type="Rhea" id="RHEA:38571"/>
        <dbReference type="ChEBI" id="CHEBI:57643"/>
    </reaction>
    <physiologicalReaction direction="left-to-right" evidence="3">
        <dbReference type="Rhea" id="RHEA:38572"/>
    </physiologicalReaction>
</comment>
<comment type="catalytic activity">
    <reaction evidence="4">
        <text>a 1,2-diacyl-sn-glycero-3-phospho-(1D-myo-inositol)(in) = a 1,2-diacyl-sn-glycero-3-phospho-(1D-myo-inositol)(out)</text>
        <dbReference type="Rhea" id="RHEA:38691"/>
        <dbReference type="ChEBI" id="CHEBI:57880"/>
    </reaction>
    <physiologicalReaction direction="left-to-right" evidence="7">
        <dbReference type="Rhea" id="RHEA:38692"/>
    </physiologicalReaction>
</comment>
<comment type="catalytic activity">
    <reaction evidence="3">
        <text>an N-(acyl)-sphingosylphosphocholine(in) = an N-(acyl)-sphingosylphosphocholine(out)</text>
        <dbReference type="Rhea" id="RHEA:43776"/>
        <dbReference type="ChEBI" id="CHEBI:64583"/>
    </reaction>
    <physiologicalReaction direction="left-to-right" evidence="3">
        <dbReference type="Rhea" id="RHEA:43777"/>
    </physiologicalReaction>
</comment>
<comment type="activity regulation">
    <text evidence="4">Phosphatidylinositol transfer activity is inhibited by N-ethylmaleimide.</text>
</comment>
<comment type="subcellular location">
    <subcellularLocation>
        <location evidence="2">Golgi apparatus</location>
    </subcellularLocation>
    <subcellularLocation>
        <location evidence="4">Golgi apparatus membrane</location>
    </subcellularLocation>
    <subcellularLocation>
        <location evidence="4">Endoplasmic reticulum membrane</location>
    </subcellularLocation>
</comment>
<comment type="alternative products">
    <event type="alternative splicing"/>
    <isoform>
        <id>P53812-1</id>
        <name>1</name>
        <sequence type="displayed"/>
    </isoform>
    <isoform>
        <id>P53812-2</id>
        <name>2</name>
        <sequence type="described" ref="VSP_012763"/>
    </isoform>
</comment>
<comment type="tissue specificity">
    <text evidence="5">Expressed abundantly in brain, kidney, liver, and lung, but in a lesser amount in testis.</text>
</comment>
<comment type="PTM">
    <text evidence="2">Constitutive phosphorylation of Ser-262 has no effect on phospholipid transfer activity but is required for Golgi targeting.</text>
</comment>
<comment type="similarity">
    <text evidence="6">Belongs to the PtdIns transfer protein family. PI transfer class I subfamily.</text>
</comment>
<keyword id="KW-0002">3D-structure</keyword>
<keyword id="KW-0007">Acetylation</keyword>
<keyword id="KW-0025">Alternative splicing</keyword>
<keyword id="KW-0256">Endoplasmic reticulum</keyword>
<keyword id="KW-0333">Golgi apparatus</keyword>
<keyword id="KW-0445">Lipid transport</keyword>
<keyword id="KW-0446">Lipid-binding</keyword>
<keyword id="KW-0472">Membrane</keyword>
<keyword id="KW-0597">Phosphoprotein</keyword>
<keyword id="KW-1185">Reference proteome</keyword>
<keyword id="KW-0813">Transport</keyword>
<dbReference type="EMBL" id="D21132">
    <property type="protein sequence ID" value="BAA04669.1"/>
    <property type="molecule type" value="mRNA"/>
</dbReference>
<dbReference type="EMBL" id="BC061538">
    <property type="protein sequence ID" value="AAH61538.1"/>
    <property type="molecule type" value="mRNA"/>
</dbReference>
<dbReference type="PIR" id="JX0316">
    <property type="entry name" value="JX0316"/>
</dbReference>
<dbReference type="RefSeq" id="NP_446194.1">
    <molecule id="P53812-1"/>
    <property type="nucleotide sequence ID" value="NM_053742.2"/>
</dbReference>
<dbReference type="RefSeq" id="XP_006249584.1">
    <molecule id="P53812-2"/>
    <property type="nucleotide sequence ID" value="XM_006249522.5"/>
</dbReference>
<dbReference type="PDB" id="2A1L">
    <property type="method" value="X-ray"/>
    <property type="resolution" value="2.18 A"/>
    <property type="chains" value="A=2-271"/>
</dbReference>
<dbReference type="PDBsum" id="2A1L"/>
<dbReference type="SMR" id="P53812"/>
<dbReference type="FunCoup" id="P53812">
    <property type="interactions" value="3612"/>
</dbReference>
<dbReference type="STRING" id="10116.ENSRNOP00000050368"/>
<dbReference type="iPTMnet" id="P53812"/>
<dbReference type="PhosphoSitePlus" id="P53812"/>
<dbReference type="SwissPalm" id="P53812"/>
<dbReference type="jPOST" id="P53812"/>
<dbReference type="PaxDb" id="10116-ENSRNOP00000050368"/>
<dbReference type="Ensembl" id="ENSRNOT00000052202.5">
    <molecule id="P53812-2"/>
    <property type="protein sequence ID" value="ENSRNOP00000050368.5"/>
    <property type="gene ID" value="ENSRNOG00000000665.8"/>
</dbReference>
<dbReference type="Ensembl" id="ENSRNOT00000115325.1">
    <molecule id="P53812-1"/>
    <property type="protein sequence ID" value="ENSRNOP00000078649.1"/>
    <property type="gene ID" value="ENSRNOG00000000665.8"/>
</dbReference>
<dbReference type="GeneID" id="114561"/>
<dbReference type="KEGG" id="rno:114561"/>
<dbReference type="UCSC" id="RGD:620143">
    <molecule id="P53812-1"/>
    <property type="organism name" value="rat"/>
</dbReference>
<dbReference type="AGR" id="RGD:620143"/>
<dbReference type="CTD" id="23760"/>
<dbReference type="RGD" id="620143">
    <property type="gene designation" value="Pitpnb"/>
</dbReference>
<dbReference type="eggNOG" id="KOG3668">
    <property type="taxonomic scope" value="Eukaryota"/>
</dbReference>
<dbReference type="GeneTree" id="ENSGT00940000155101"/>
<dbReference type="HOGENOM" id="CLU_046509_0_0_1"/>
<dbReference type="InParanoid" id="P53812"/>
<dbReference type="OMA" id="NELKPDC"/>
<dbReference type="OrthoDB" id="18453at2759"/>
<dbReference type="Reactome" id="R-RNO-1483196">
    <property type="pathway name" value="PI and PC transport between ER and Golgi membranes"/>
</dbReference>
<dbReference type="EvolutionaryTrace" id="P53812"/>
<dbReference type="PRO" id="PR:P53812"/>
<dbReference type="Proteomes" id="UP000002494">
    <property type="component" value="Chromosome 12"/>
</dbReference>
<dbReference type="Bgee" id="ENSRNOG00000000665">
    <property type="expression patterns" value="Expressed in heart and 19 other cell types or tissues"/>
</dbReference>
<dbReference type="ExpressionAtlas" id="P53812">
    <property type="expression patterns" value="baseline and differential"/>
</dbReference>
<dbReference type="GO" id="GO:0005737">
    <property type="term" value="C:cytoplasm"/>
    <property type="evidence" value="ECO:0000318"/>
    <property type="project" value="GO_Central"/>
</dbReference>
<dbReference type="GO" id="GO:0005789">
    <property type="term" value="C:endoplasmic reticulum membrane"/>
    <property type="evidence" value="ECO:0000314"/>
    <property type="project" value="UniProtKB"/>
</dbReference>
<dbReference type="GO" id="GO:0005794">
    <property type="term" value="C:Golgi apparatus"/>
    <property type="evidence" value="ECO:0000266"/>
    <property type="project" value="RGD"/>
</dbReference>
<dbReference type="GO" id="GO:0000139">
    <property type="term" value="C:Golgi membrane"/>
    <property type="evidence" value="ECO:0000314"/>
    <property type="project" value="UniProtKB"/>
</dbReference>
<dbReference type="GO" id="GO:0031210">
    <property type="term" value="F:phosphatidylcholine binding"/>
    <property type="evidence" value="ECO:0000314"/>
    <property type="project" value="BHF-UCL"/>
</dbReference>
<dbReference type="GO" id="GO:0120019">
    <property type="term" value="F:phosphatidylcholine transfer activity"/>
    <property type="evidence" value="ECO:0000250"/>
    <property type="project" value="UniProtKB"/>
</dbReference>
<dbReference type="GO" id="GO:0008525">
    <property type="term" value="F:phosphatidylcholine transporter activity"/>
    <property type="evidence" value="ECO:0000314"/>
    <property type="project" value="BHF-UCL"/>
</dbReference>
<dbReference type="GO" id="GO:0035091">
    <property type="term" value="F:phosphatidylinositol binding"/>
    <property type="evidence" value="ECO:0000314"/>
    <property type="project" value="BHF-UCL"/>
</dbReference>
<dbReference type="GO" id="GO:0008526">
    <property type="term" value="F:phosphatidylinositol transfer activity"/>
    <property type="evidence" value="ECO:0000314"/>
    <property type="project" value="BHF-UCL"/>
</dbReference>
<dbReference type="GO" id="GO:0140338">
    <property type="term" value="F:sphingomyelin transfer activity"/>
    <property type="evidence" value="ECO:0000250"/>
    <property type="project" value="UniProtKB"/>
</dbReference>
<dbReference type="GO" id="GO:0001701">
    <property type="term" value="P:in utero embryonic development"/>
    <property type="evidence" value="ECO:0000266"/>
    <property type="project" value="RGD"/>
</dbReference>
<dbReference type="GO" id="GO:0015914">
    <property type="term" value="P:phospholipid transport"/>
    <property type="evidence" value="ECO:0000314"/>
    <property type="project" value="BHF-UCL"/>
</dbReference>
<dbReference type="GO" id="GO:0006890">
    <property type="term" value="P:retrograde vesicle-mediated transport, Golgi to endoplasmic reticulum"/>
    <property type="evidence" value="ECO:0000250"/>
    <property type="project" value="UniProtKB"/>
</dbReference>
<dbReference type="CDD" id="cd08888">
    <property type="entry name" value="SRPBCC_PITPNA-B_like"/>
    <property type="match status" value="1"/>
</dbReference>
<dbReference type="FunFam" id="3.30.530.20:FF:000004">
    <property type="entry name" value="Phosphatidylinositol transfer protein alpha isoform"/>
    <property type="match status" value="1"/>
</dbReference>
<dbReference type="Gene3D" id="3.30.530.20">
    <property type="match status" value="1"/>
</dbReference>
<dbReference type="InterPro" id="IPR001666">
    <property type="entry name" value="PI_transfer"/>
</dbReference>
<dbReference type="InterPro" id="IPR055261">
    <property type="entry name" value="PI_transfer_N"/>
</dbReference>
<dbReference type="InterPro" id="IPR023393">
    <property type="entry name" value="START-like_dom_sf"/>
</dbReference>
<dbReference type="PANTHER" id="PTHR10658">
    <property type="entry name" value="PHOSPHATIDYLINOSITOL TRANSFER PROTEIN"/>
    <property type="match status" value="1"/>
</dbReference>
<dbReference type="PANTHER" id="PTHR10658:SF27">
    <property type="entry name" value="PHOSPHATIDYLINOSITOL TRANSFER PROTEIN BETA ISOFORM"/>
    <property type="match status" value="1"/>
</dbReference>
<dbReference type="Pfam" id="PF02121">
    <property type="entry name" value="IP_trans"/>
    <property type="match status" value="1"/>
</dbReference>
<dbReference type="PRINTS" id="PR00391">
    <property type="entry name" value="PITRANSFER"/>
</dbReference>
<dbReference type="SUPFAM" id="SSF55961">
    <property type="entry name" value="Bet v1-like"/>
    <property type="match status" value="1"/>
</dbReference>
<organism>
    <name type="scientific">Rattus norvegicus</name>
    <name type="common">Rat</name>
    <dbReference type="NCBI Taxonomy" id="10116"/>
    <lineage>
        <taxon>Eukaryota</taxon>
        <taxon>Metazoa</taxon>
        <taxon>Chordata</taxon>
        <taxon>Craniata</taxon>
        <taxon>Vertebrata</taxon>
        <taxon>Euteleostomi</taxon>
        <taxon>Mammalia</taxon>
        <taxon>Eutheria</taxon>
        <taxon>Euarchontoglires</taxon>
        <taxon>Glires</taxon>
        <taxon>Rodentia</taxon>
        <taxon>Myomorpha</taxon>
        <taxon>Muroidea</taxon>
        <taxon>Muridae</taxon>
        <taxon>Murinae</taxon>
        <taxon>Rattus</taxon>
    </lineage>
</organism>
<accession>P53812</accession>
<accession>Q6P7S3</accession>
<name>PIPNB_RAT</name>
<reference key="1">
    <citation type="journal article" date="1994" name="J. Biochem.">
        <title>Cloning of a cDNA encoding a second phosphatidylinositol transfer protein of rat brain by complementation of the yeast sec14 mutation.</title>
        <authorList>
            <person name="Tanaka S."/>
            <person name="Hosaka K."/>
        </authorList>
    </citation>
    <scope>NUCLEOTIDE SEQUENCE [MRNA] (ISOFORM 1)</scope>
    <scope>TISSUE SPECIFICITY</scope>
    <source>
        <strain>Wistar</strain>
        <tissue>Brain</tissue>
    </source>
</reference>
<reference key="2">
    <citation type="journal article" date="2004" name="Genome Res.">
        <title>The status, quality, and expansion of the NIH full-length cDNA project: the Mammalian Gene Collection (MGC).</title>
        <authorList>
            <consortium name="The MGC Project Team"/>
        </authorList>
    </citation>
    <scope>NUCLEOTIDE SEQUENCE [LARGE SCALE MRNA]</scope>
    <source>
        <tissue>Pituitary</tissue>
    </source>
</reference>
<reference key="3">
    <citation type="journal article" date="2008" name="Traffic">
        <title>Dynamics of lipid transfer by phosphatidylinositol transfer proteins in cells.</title>
        <authorList>
            <person name="Shadan S."/>
            <person name="Holic R."/>
            <person name="Carvou N."/>
            <person name="Ee P."/>
            <person name="Li M."/>
            <person name="Murray-Rust J."/>
            <person name="Cockcroft S."/>
        </authorList>
    </citation>
    <scope>FUNCTION</scope>
    <scope>CATALYTIC ACTIVITY</scope>
    <scope>SUBCELLULAR LOCATION</scope>
    <scope>ACTIVITY REGULATION</scope>
    <scope>MUTAGENESIS OF 202-TRP-TRP-203</scope>
</reference>
<proteinExistence type="evidence at protein level"/>
<feature type="chain" id="PRO_0000191646" description="Phosphatidylinositol transfer protein beta isoform">
    <location>
        <begin position="1"/>
        <end position="271"/>
    </location>
</feature>
<feature type="modified residue" description="N6-acetyllysine" evidence="1">
    <location>
        <position position="215"/>
    </location>
</feature>
<feature type="modified residue" description="Phosphoserine" evidence="2">
    <location>
        <position position="262"/>
    </location>
</feature>
<feature type="splice variant" id="VSP_012763" description="In isoform 2." evidence="6">
    <original>MRKKGSVRGTSAADA</original>
    <variation>LRSQGQVRGTSAACDD</variation>
    <location>
        <begin position="257"/>
        <end position="271"/>
    </location>
</feature>
<feature type="mutagenesis site" description="Loss of Golgi membrane localization." evidence="4">
    <original>WW</original>
    <variation>AA</variation>
    <location>
        <begin position="202"/>
        <end position="203"/>
    </location>
</feature>
<feature type="strand" evidence="8">
    <location>
        <begin position="3"/>
        <end position="13"/>
    </location>
</feature>
<feature type="helix" evidence="8">
    <location>
        <begin position="15"/>
        <end position="31"/>
    </location>
</feature>
<feature type="strand" evidence="8">
    <location>
        <begin position="38"/>
        <end position="48"/>
    </location>
</feature>
<feature type="strand" evidence="8">
    <location>
        <begin position="55"/>
        <end position="63"/>
    </location>
</feature>
<feature type="turn" evidence="8">
    <location>
        <begin position="65"/>
        <end position="67"/>
    </location>
</feature>
<feature type="helix" evidence="8">
    <location>
        <begin position="70"/>
        <end position="75"/>
    </location>
</feature>
<feature type="strand" evidence="8">
    <location>
        <begin position="82"/>
        <end position="90"/>
    </location>
</feature>
<feature type="strand" evidence="8">
    <location>
        <begin position="93"/>
        <end position="99"/>
    </location>
</feature>
<feature type="turn" evidence="8">
    <location>
        <begin position="101"/>
        <end position="103"/>
    </location>
</feature>
<feature type="helix" evidence="8">
    <location>
        <begin position="104"/>
        <end position="106"/>
    </location>
</feature>
<feature type="strand" evidence="8">
    <location>
        <begin position="107"/>
        <end position="120"/>
    </location>
</feature>
<feature type="helix" evidence="8">
    <location>
        <begin position="130"/>
        <end position="133"/>
    </location>
</feature>
<feature type="strand" evidence="8">
    <location>
        <begin position="136"/>
        <end position="141"/>
    </location>
</feature>
<feature type="helix" evidence="8">
    <location>
        <begin position="146"/>
        <end position="148"/>
    </location>
</feature>
<feature type="turn" evidence="8">
    <location>
        <begin position="151"/>
        <end position="153"/>
    </location>
</feature>
<feature type="helix" evidence="8">
    <location>
        <begin position="156"/>
        <end position="158"/>
    </location>
</feature>
<feature type="helix" evidence="8">
    <location>
        <begin position="160"/>
        <end position="162"/>
    </location>
</feature>
<feature type="turn" evidence="8">
    <location>
        <begin position="166"/>
        <end position="168"/>
    </location>
</feature>
<feature type="helix" evidence="8">
    <location>
        <begin position="177"/>
        <end position="182"/>
    </location>
</feature>
<feature type="strand" evidence="8">
    <location>
        <begin position="190"/>
        <end position="200"/>
    </location>
</feature>
<feature type="turn" evidence="8">
    <location>
        <begin position="203"/>
        <end position="205"/>
    </location>
</feature>
<feature type="helix" evidence="8">
    <location>
        <begin position="206"/>
        <end position="230"/>
    </location>
</feature>
<feature type="helix" evidence="8">
    <location>
        <begin position="232"/>
        <end position="235"/>
    </location>
</feature>
<feature type="helix" evidence="8">
    <location>
        <begin position="240"/>
        <end position="257"/>
    </location>
</feature>
<evidence type="ECO:0000250" key="1">
    <source>
        <dbReference type="UniProtKB" id="P48739"/>
    </source>
</evidence>
<evidence type="ECO:0000250" key="2">
    <source>
        <dbReference type="UniProtKB" id="P53811"/>
    </source>
</evidence>
<evidence type="ECO:0000250" key="3">
    <source>
        <dbReference type="UniProtKB" id="Q9TR36"/>
    </source>
</evidence>
<evidence type="ECO:0000269" key="4">
    <source>
    </source>
</evidence>
<evidence type="ECO:0000269" key="5">
    <source>
    </source>
</evidence>
<evidence type="ECO:0000305" key="6"/>
<evidence type="ECO:0000305" key="7">
    <source>
    </source>
</evidence>
<evidence type="ECO:0007829" key="8">
    <source>
        <dbReference type="PDB" id="2A1L"/>
    </source>
</evidence>
<gene>
    <name type="primary">Pitpnb</name>
</gene>
<protein>
    <recommendedName>
        <fullName>Phosphatidylinositol transfer protein beta isoform</fullName>
        <shortName>PI-TP-beta</shortName>
        <shortName>PtdIns transfer protein beta</shortName>
        <shortName>PtdInsTP beta</shortName>
    </recommendedName>
</protein>